<name>RPPH_ACIAD</name>
<feature type="chain" id="PRO_0000231894" description="RNA pyrophosphohydrolase">
    <location>
        <begin position="1"/>
        <end position="166"/>
    </location>
</feature>
<feature type="domain" description="Nudix hydrolase" evidence="1">
    <location>
        <begin position="6"/>
        <end position="149"/>
    </location>
</feature>
<feature type="short sequence motif" description="Nudix box">
    <location>
        <begin position="38"/>
        <end position="59"/>
    </location>
</feature>
<comment type="function">
    <text evidence="1">Accelerates the degradation of transcripts by removing pyrophosphate from the 5'-end of triphosphorylated RNA, leading to a more labile monophosphorylated state that can stimulate subsequent ribonuclease cleavage.</text>
</comment>
<comment type="cofactor">
    <cofactor evidence="1">
        <name>a divalent metal cation</name>
        <dbReference type="ChEBI" id="CHEBI:60240"/>
    </cofactor>
</comment>
<comment type="similarity">
    <text evidence="1">Belongs to the Nudix hydrolase family. RppH subfamily.</text>
</comment>
<keyword id="KW-0378">Hydrolase</keyword>
<organism>
    <name type="scientific">Acinetobacter baylyi (strain ATCC 33305 / BD413 / ADP1)</name>
    <dbReference type="NCBI Taxonomy" id="62977"/>
    <lineage>
        <taxon>Bacteria</taxon>
        <taxon>Pseudomonadati</taxon>
        <taxon>Pseudomonadota</taxon>
        <taxon>Gammaproteobacteria</taxon>
        <taxon>Moraxellales</taxon>
        <taxon>Moraxellaceae</taxon>
        <taxon>Acinetobacter</taxon>
    </lineage>
</organism>
<evidence type="ECO:0000255" key="1">
    <source>
        <dbReference type="HAMAP-Rule" id="MF_00298"/>
    </source>
</evidence>
<dbReference type="EC" id="3.6.1.-" evidence="1"/>
<dbReference type="EMBL" id="CR543861">
    <property type="protein sequence ID" value="CAG67391.1"/>
    <property type="molecule type" value="Genomic_DNA"/>
</dbReference>
<dbReference type="RefSeq" id="WP_004920265.1">
    <property type="nucleotide sequence ID" value="NC_005966.1"/>
</dbReference>
<dbReference type="SMR" id="Q6FEW7"/>
<dbReference type="STRING" id="202950.GCA_001485005_00705"/>
<dbReference type="GeneID" id="45232946"/>
<dbReference type="KEGG" id="aci:ACIAD0455"/>
<dbReference type="eggNOG" id="COG0494">
    <property type="taxonomic scope" value="Bacteria"/>
</dbReference>
<dbReference type="HOGENOM" id="CLU_087195_3_1_6"/>
<dbReference type="OrthoDB" id="9816040at2"/>
<dbReference type="BioCyc" id="ASP62977:ACIAD_RS02090-MONOMER"/>
<dbReference type="Proteomes" id="UP000000430">
    <property type="component" value="Chromosome"/>
</dbReference>
<dbReference type="GO" id="GO:0016462">
    <property type="term" value="F:pyrophosphatase activity"/>
    <property type="evidence" value="ECO:0007669"/>
    <property type="project" value="UniProtKB-ARBA"/>
</dbReference>
<dbReference type="CDD" id="cd03671">
    <property type="entry name" value="NUDIX_Ap4A_hydrolase_plant_like"/>
    <property type="match status" value="1"/>
</dbReference>
<dbReference type="FunFam" id="3.90.79.10:FF:000001">
    <property type="entry name" value="RNA pyrophosphohydrolase"/>
    <property type="match status" value="1"/>
</dbReference>
<dbReference type="Gene3D" id="3.90.79.10">
    <property type="entry name" value="Nucleoside Triphosphate Pyrophosphohydrolase"/>
    <property type="match status" value="1"/>
</dbReference>
<dbReference type="HAMAP" id="MF_00298">
    <property type="entry name" value="Nudix_RppH"/>
    <property type="match status" value="1"/>
</dbReference>
<dbReference type="InterPro" id="IPR020476">
    <property type="entry name" value="Nudix_hydrolase"/>
</dbReference>
<dbReference type="InterPro" id="IPR015797">
    <property type="entry name" value="NUDIX_hydrolase-like_dom_sf"/>
</dbReference>
<dbReference type="InterPro" id="IPR020084">
    <property type="entry name" value="NUDIX_hydrolase_CS"/>
</dbReference>
<dbReference type="InterPro" id="IPR000086">
    <property type="entry name" value="NUDIX_hydrolase_dom"/>
</dbReference>
<dbReference type="InterPro" id="IPR022927">
    <property type="entry name" value="RppH"/>
</dbReference>
<dbReference type="NCBIfam" id="NF001934">
    <property type="entry name" value="PRK00714.1-1"/>
    <property type="match status" value="1"/>
</dbReference>
<dbReference type="NCBIfam" id="NF001937">
    <property type="entry name" value="PRK00714.1-4"/>
    <property type="match status" value="1"/>
</dbReference>
<dbReference type="NCBIfam" id="NF001938">
    <property type="entry name" value="PRK00714.1-5"/>
    <property type="match status" value="1"/>
</dbReference>
<dbReference type="PANTHER" id="PTHR43736">
    <property type="entry name" value="ADP-RIBOSE PYROPHOSPHATASE"/>
    <property type="match status" value="1"/>
</dbReference>
<dbReference type="PANTHER" id="PTHR43736:SF1">
    <property type="entry name" value="DIHYDRONEOPTERIN TRIPHOSPHATE DIPHOSPHATASE"/>
    <property type="match status" value="1"/>
</dbReference>
<dbReference type="Pfam" id="PF00293">
    <property type="entry name" value="NUDIX"/>
    <property type="match status" value="1"/>
</dbReference>
<dbReference type="PRINTS" id="PR00502">
    <property type="entry name" value="NUDIXFAMILY"/>
</dbReference>
<dbReference type="SUPFAM" id="SSF55811">
    <property type="entry name" value="Nudix"/>
    <property type="match status" value="1"/>
</dbReference>
<dbReference type="PROSITE" id="PS51462">
    <property type="entry name" value="NUDIX"/>
    <property type="match status" value="1"/>
</dbReference>
<dbReference type="PROSITE" id="PS00893">
    <property type="entry name" value="NUDIX_BOX"/>
    <property type="match status" value="1"/>
</dbReference>
<sequence length="166" mass="19564">MIDSEGFRPNVGIILANDNGQVLWAKRIGHNAWQFPQGGIHFGETPEQALYRELREEVGLLPEHVQIIAQTKGWLRYRLPHRYIRPDSDPVCIGQKQKWFLLKLTASTRHIQLNLSDPPEFDEWQWVSYWYPLGQVVNFKRDVYRKAMMELCMLLPQQQTFEKSSL</sequence>
<proteinExistence type="inferred from homology"/>
<accession>Q6FEW7</accession>
<gene>
    <name evidence="1" type="primary">rppH</name>
    <name evidence="1" type="synonym">nudH</name>
    <name type="ordered locus">ACIAD0455</name>
</gene>
<reference key="1">
    <citation type="journal article" date="2004" name="Nucleic Acids Res.">
        <title>Unique features revealed by the genome sequence of Acinetobacter sp. ADP1, a versatile and naturally transformation competent bacterium.</title>
        <authorList>
            <person name="Barbe V."/>
            <person name="Vallenet D."/>
            <person name="Fonknechten N."/>
            <person name="Kreimeyer A."/>
            <person name="Oztas S."/>
            <person name="Labarre L."/>
            <person name="Cruveiller S."/>
            <person name="Robert C."/>
            <person name="Duprat S."/>
            <person name="Wincker P."/>
            <person name="Ornston L.N."/>
            <person name="Weissenbach J."/>
            <person name="Marliere P."/>
            <person name="Cohen G.N."/>
            <person name="Medigue C."/>
        </authorList>
    </citation>
    <scope>NUCLEOTIDE SEQUENCE [LARGE SCALE GENOMIC DNA]</scope>
    <source>
        <strain>ATCC 33305 / BD413 / ADP1</strain>
    </source>
</reference>
<protein>
    <recommendedName>
        <fullName evidence="1">RNA pyrophosphohydrolase</fullName>
        <ecNumber evidence="1">3.6.1.-</ecNumber>
    </recommendedName>
    <alternativeName>
        <fullName evidence="1">(Di)nucleoside polyphosphate hydrolase</fullName>
    </alternativeName>
</protein>